<feature type="chain" id="PRO_0000108405" description="Cytochrome c-554(548)">
    <location>
        <begin position="1"/>
        <end position="83"/>
    </location>
</feature>
<feature type="binding site" description="covalent">
    <location>
        <position position="14"/>
    </location>
    <ligand>
        <name>heme c</name>
        <dbReference type="ChEBI" id="CHEBI:61717"/>
    </ligand>
</feature>
<feature type="binding site" description="covalent">
    <location>
        <position position="17"/>
    </location>
    <ligand>
        <name>heme c</name>
        <dbReference type="ChEBI" id="CHEBI:61717"/>
    </ligand>
</feature>
<feature type="binding site" description="axial binding residue">
    <location>
        <position position="18"/>
    </location>
    <ligand>
        <name>heme c</name>
        <dbReference type="ChEBI" id="CHEBI:61717"/>
    </ligand>
    <ligandPart>
        <name>Fe</name>
        <dbReference type="ChEBI" id="CHEBI:18248"/>
    </ligandPart>
</feature>
<feature type="binding site" description="axial binding residue">
    <location>
        <position position="63"/>
    </location>
    <ligand>
        <name>heme c</name>
        <dbReference type="ChEBI" id="CHEBI:61717"/>
    </ligand>
    <ligandPart>
        <name>Fe</name>
        <dbReference type="ChEBI" id="CHEBI:18248"/>
    </ligandPart>
</feature>
<comment type="subunit">
    <text>Homodimer.</text>
</comment>
<comment type="PTM">
    <text>Binds 1 heme c group covalently per subunit.</text>
</comment>
<name>C554_HALH2</name>
<accession>P00105</accession>
<sequence>AGDAAAGEDKIGTCVACHGTDGQGLAPIYPNLTGQSATYLESSIKAYRDGQRKGGNAALMTPMAQGLSDEDIADIAAYYSSQE</sequence>
<protein>
    <recommendedName>
        <fullName>Cytochrome c-554(548)</fullName>
        <shortName>Cytochrome c554</shortName>
    </recommendedName>
</protein>
<reference key="1">
    <citation type="journal article" date="1987" name="Biochem. J.">
        <title>Amino acid sequences of cytochrome c-554(548) and cytochrome c' from a halophilic denitrifying bacterium of the genus Paracoccus.</title>
        <authorList>
            <person name="Ambler R.P."/>
            <person name="Daniel M."/>
            <person name="McLellan L."/>
            <person name="Meyer T.E."/>
            <person name="Cusanovich M.A."/>
            <person name="Kamen M.D."/>
        </authorList>
    </citation>
    <scope>PROTEIN SEQUENCE</scope>
</reference>
<reference key="2">
    <citation type="book" date="1977" name="The evolution of metalloenzymes, metalloproteins and related materials">
        <title>Cytochrome c and copper protein evolution in prokaryotes.</title>
        <editorList>
            <person name="Leigh G.J."/>
        </editorList>
        <authorList>
            <person name="Ambler R.P."/>
        </authorList>
    </citation>
    <scope>PROTEIN SEQUENCE</scope>
</reference>
<dbReference type="SMR" id="P00105"/>
<dbReference type="GO" id="GO:0009055">
    <property type="term" value="F:electron transfer activity"/>
    <property type="evidence" value="ECO:0007669"/>
    <property type="project" value="InterPro"/>
</dbReference>
<dbReference type="GO" id="GO:0020037">
    <property type="term" value="F:heme binding"/>
    <property type="evidence" value="ECO:0007669"/>
    <property type="project" value="InterPro"/>
</dbReference>
<dbReference type="GO" id="GO:0005506">
    <property type="term" value="F:iron ion binding"/>
    <property type="evidence" value="ECO:0007669"/>
    <property type="project" value="InterPro"/>
</dbReference>
<dbReference type="Gene3D" id="1.10.760.10">
    <property type="entry name" value="Cytochrome c-like domain"/>
    <property type="match status" value="1"/>
</dbReference>
<dbReference type="InterPro" id="IPR009056">
    <property type="entry name" value="Cyt_c-like_dom"/>
</dbReference>
<dbReference type="InterPro" id="IPR036909">
    <property type="entry name" value="Cyt_c-like_dom_sf"/>
</dbReference>
<dbReference type="InterPro" id="IPR008168">
    <property type="entry name" value="Cyt_C_IC"/>
</dbReference>
<dbReference type="InterPro" id="IPR050597">
    <property type="entry name" value="Cytochrome_c_Oxidase_Subunit"/>
</dbReference>
<dbReference type="PANTHER" id="PTHR33751">
    <property type="entry name" value="CBB3-TYPE CYTOCHROME C OXIDASE SUBUNIT FIXP"/>
    <property type="match status" value="1"/>
</dbReference>
<dbReference type="PANTHER" id="PTHR33751:SF9">
    <property type="entry name" value="CYTOCHROME C4"/>
    <property type="match status" value="1"/>
</dbReference>
<dbReference type="Pfam" id="PF00034">
    <property type="entry name" value="Cytochrom_C"/>
    <property type="match status" value="1"/>
</dbReference>
<dbReference type="PRINTS" id="PR00605">
    <property type="entry name" value="CYTCHROMECIC"/>
</dbReference>
<dbReference type="SUPFAM" id="SSF46626">
    <property type="entry name" value="Cytochrome c"/>
    <property type="match status" value="1"/>
</dbReference>
<dbReference type="PROSITE" id="PS51007">
    <property type="entry name" value="CYTC"/>
    <property type="match status" value="1"/>
</dbReference>
<organism>
    <name type="scientific">Halomonas halodenitrificans (strain ATCC 12084 / NCIMB 8669)</name>
    <name type="common">Paracoccus halodenitrificans</name>
    <dbReference type="NCBI Taxonomy" id="31991"/>
    <lineage>
        <taxon>Bacteria</taxon>
        <taxon>Pseudomonadati</taxon>
        <taxon>Pseudomonadota</taxon>
        <taxon>Gammaproteobacteria</taxon>
        <taxon>Oceanospirillales</taxon>
        <taxon>Halomonadaceae</taxon>
        <taxon>Halomonas</taxon>
    </lineage>
</organism>
<keyword id="KW-0903">Direct protein sequencing</keyword>
<keyword id="KW-0249">Electron transport</keyword>
<keyword id="KW-0349">Heme</keyword>
<keyword id="KW-0408">Iron</keyword>
<keyword id="KW-0479">Metal-binding</keyword>
<keyword id="KW-0813">Transport</keyword>
<proteinExistence type="evidence at protein level"/>